<name>RRF_SALCH</name>
<comment type="function">
    <text evidence="1">Responsible for the release of ribosomes from messenger RNA at the termination of protein biosynthesis. May increase the efficiency of translation by recycling ribosomes from one round of translation to another.</text>
</comment>
<comment type="subcellular location">
    <subcellularLocation>
        <location evidence="1">Cytoplasm</location>
    </subcellularLocation>
</comment>
<comment type="similarity">
    <text evidence="1">Belongs to the RRF family.</text>
</comment>
<proteinExistence type="inferred from homology"/>
<evidence type="ECO:0000255" key="1">
    <source>
        <dbReference type="HAMAP-Rule" id="MF_00040"/>
    </source>
</evidence>
<protein>
    <recommendedName>
        <fullName evidence="1">Ribosome-recycling factor</fullName>
        <shortName evidence="1">RRF</shortName>
    </recommendedName>
    <alternativeName>
        <fullName evidence="1">Ribosome-releasing factor</fullName>
    </alternativeName>
</protein>
<gene>
    <name evidence="1" type="primary">frr</name>
    <name type="ordered locus">SCH_0219</name>
</gene>
<keyword id="KW-0963">Cytoplasm</keyword>
<keyword id="KW-0648">Protein biosynthesis</keyword>
<reference key="1">
    <citation type="journal article" date="2005" name="Nucleic Acids Res.">
        <title>The genome sequence of Salmonella enterica serovar Choleraesuis, a highly invasive and resistant zoonotic pathogen.</title>
        <authorList>
            <person name="Chiu C.-H."/>
            <person name="Tang P."/>
            <person name="Chu C."/>
            <person name="Hu S."/>
            <person name="Bao Q."/>
            <person name="Yu J."/>
            <person name="Chou Y.-Y."/>
            <person name="Wang H.-S."/>
            <person name="Lee Y.-S."/>
        </authorList>
    </citation>
    <scope>NUCLEOTIDE SEQUENCE [LARGE SCALE GENOMIC DNA]</scope>
    <source>
        <strain>SC-B67</strain>
    </source>
</reference>
<sequence>MISDIRKDAEVRMEKCVEAFKTQISKVRTGRASPSLLDGIVVEYYGTPTPLRQLASVTVEDSRTLKINVFDRSMGPAVEKAIMASDLGLNPSSAGTDIRVPLPPLTEERRKDLTKIVRGEAEQARVAVRNVRRDANDKVKALLKDKAISEDDDRRSQEEVQKMTDAAIKKVDAALADKEAELMQF</sequence>
<organism>
    <name type="scientific">Salmonella choleraesuis (strain SC-B67)</name>
    <dbReference type="NCBI Taxonomy" id="321314"/>
    <lineage>
        <taxon>Bacteria</taxon>
        <taxon>Pseudomonadati</taxon>
        <taxon>Pseudomonadota</taxon>
        <taxon>Gammaproteobacteria</taxon>
        <taxon>Enterobacterales</taxon>
        <taxon>Enterobacteriaceae</taxon>
        <taxon>Salmonella</taxon>
    </lineage>
</organism>
<accession>Q57T36</accession>
<dbReference type="EMBL" id="AE017220">
    <property type="protein sequence ID" value="AAX64125.1"/>
    <property type="molecule type" value="Genomic_DNA"/>
</dbReference>
<dbReference type="RefSeq" id="WP_000622423.1">
    <property type="nucleotide sequence ID" value="NC_006905.1"/>
</dbReference>
<dbReference type="SMR" id="Q57T36"/>
<dbReference type="KEGG" id="sec:SCH_0219"/>
<dbReference type="HOGENOM" id="CLU_073981_2_1_6"/>
<dbReference type="Proteomes" id="UP000000538">
    <property type="component" value="Chromosome"/>
</dbReference>
<dbReference type="GO" id="GO:0005829">
    <property type="term" value="C:cytosol"/>
    <property type="evidence" value="ECO:0007669"/>
    <property type="project" value="GOC"/>
</dbReference>
<dbReference type="GO" id="GO:0043023">
    <property type="term" value="F:ribosomal large subunit binding"/>
    <property type="evidence" value="ECO:0007669"/>
    <property type="project" value="TreeGrafter"/>
</dbReference>
<dbReference type="GO" id="GO:0002184">
    <property type="term" value="P:cytoplasmic translational termination"/>
    <property type="evidence" value="ECO:0007669"/>
    <property type="project" value="TreeGrafter"/>
</dbReference>
<dbReference type="CDD" id="cd00520">
    <property type="entry name" value="RRF"/>
    <property type="match status" value="1"/>
</dbReference>
<dbReference type="FunFam" id="1.10.132.20:FF:000001">
    <property type="entry name" value="Ribosome-recycling factor"/>
    <property type="match status" value="1"/>
</dbReference>
<dbReference type="FunFam" id="3.30.1360.40:FF:000001">
    <property type="entry name" value="Ribosome-recycling factor"/>
    <property type="match status" value="1"/>
</dbReference>
<dbReference type="Gene3D" id="3.30.1360.40">
    <property type="match status" value="1"/>
</dbReference>
<dbReference type="Gene3D" id="1.10.132.20">
    <property type="entry name" value="Ribosome-recycling factor"/>
    <property type="match status" value="1"/>
</dbReference>
<dbReference type="HAMAP" id="MF_00040">
    <property type="entry name" value="RRF"/>
    <property type="match status" value="1"/>
</dbReference>
<dbReference type="InterPro" id="IPR002661">
    <property type="entry name" value="Ribosome_recyc_fac"/>
</dbReference>
<dbReference type="InterPro" id="IPR023584">
    <property type="entry name" value="Ribosome_recyc_fac_dom"/>
</dbReference>
<dbReference type="InterPro" id="IPR036191">
    <property type="entry name" value="RRF_sf"/>
</dbReference>
<dbReference type="NCBIfam" id="TIGR00496">
    <property type="entry name" value="frr"/>
    <property type="match status" value="1"/>
</dbReference>
<dbReference type="PANTHER" id="PTHR20982:SF3">
    <property type="entry name" value="MITOCHONDRIAL RIBOSOME RECYCLING FACTOR PSEUDO 1"/>
    <property type="match status" value="1"/>
</dbReference>
<dbReference type="PANTHER" id="PTHR20982">
    <property type="entry name" value="RIBOSOME RECYCLING FACTOR"/>
    <property type="match status" value="1"/>
</dbReference>
<dbReference type="Pfam" id="PF01765">
    <property type="entry name" value="RRF"/>
    <property type="match status" value="1"/>
</dbReference>
<dbReference type="SUPFAM" id="SSF55194">
    <property type="entry name" value="Ribosome recycling factor, RRF"/>
    <property type="match status" value="1"/>
</dbReference>
<feature type="chain" id="PRO_0000167531" description="Ribosome-recycling factor">
    <location>
        <begin position="1"/>
        <end position="185"/>
    </location>
</feature>